<comment type="function">
    <text evidence="6">Snake venom serine protease homolog that may act in the hemostasis system of the prey.</text>
</comment>
<comment type="subcellular location">
    <subcellularLocation>
        <location evidence="4">Secreted</location>
    </subcellularLocation>
</comment>
<comment type="tissue specificity">
    <text evidence="7">Expressed by the venom gland.</text>
</comment>
<comment type="similarity">
    <text evidence="6">Belongs to the peptidase S1 family. Snake venom subfamily.</text>
</comment>
<comment type="caution">
    <text evidence="6">Lacks the conserved His residue in position 66 and the conserved Ser residue in position 205 essential for protease activity.</text>
</comment>
<sequence>VLIRVLANLLLLQLSYAQESSELVIGGDECDINEHPFLVALHTARSKRFHCAGTLLNKEWVLTAARCDMENMQIYLGLHNISRPNQDQKRRVPKEKHFCVSSKTYTRWDKDIMLIRLKRPVNDGTHIAPLSLPSNPPSVGSVCRIMGWGSITTTKVTYPDVPHCANIKLFDYSVCRDAYKGLPEKSRTLCAGILEGGIDSCKVDNGGPLICNGQFQGIGSWEGHPCAQPLKPALYTNVFEYTDWIEGIIARNTTVTCPP</sequence>
<protein>
    <recommendedName>
        <fullName evidence="5">Snake venom serine protease homolog rhinocerase 3</fullName>
        <shortName evidence="5">BG-RHIN3</shortName>
    </recommendedName>
    <alternativeName>
        <fullName>Venom serine proteinase-like protein 3</fullName>
    </alternativeName>
</protein>
<organism>
    <name type="scientific">Bitis rhinoceros</name>
    <name type="common">West African gaboon viper</name>
    <name type="synonym">Vipera rhinoceros</name>
    <dbReference type="NCBI Taxonomy" id="715877"/>
    <lineage>
        <taxon>Eukaryota</taxon>
        <taxon>Metazoa</taxon>
        <taxon>Chordata</taxon>
        <taxon>Craniata</taxon>
        <taxon>Vertebrata</taxon>
        <taxon>Euteleostomi</taxon>
        <taxon>Lepidosauria</taxon>
        <taxon>Squamata</taxon>
        <taxon>Bifurcata</taxon>
        <taxon>Unidentata</taxon>
        <taxon>Episquamata</taxon>
        <taxon>Toxicofera</taxon>
        <taxon>Serpentes</taxon>
        <taxon>Colubroidea</taxon>
        <taxon>Viperidae</taxon>
        <taxon>Viperinae</taxon>
        <taxon>Bitis</taxon>
    </lineage>
</organism>
<proteinExistence type="evidence at protein level"/>
<evidence type="ECO:0000250" key="1">
    <source>
        <dbReference type="UniProtKB" id="Q6T6S7"/>
    </source>
</evidence>
<evidence type="ECO:0000255" key="2"/>
<evidence type="ECO:0000255" key="3">
    <source>
        <dbReference type="PROSITE-ProRule" id="PRU00274"/>
    </source>
</evidence>
<evidence type="ECO:0000269" key="4">
    <source>
    </source>
</evidence>
<evidence type="ECO:0000303" key="5">
    <source>
    </source>
</evidence>
<evidence type="ECO:0000305" key="6"/>
<evidence type="ECO:0000305" key="7">
    <source>
    </source>
</evidence>
<evidence type="ECO:0000305" key="8">
    <source>
    </source>
</evidence>
<dbReference type="EMBL" id="FN868646">
    <property type="protein sequence ID" value="CBM40646.1"/>
    <property type="molecule type" value="Genomic_DNA"/>
</dbReference>
<dbReference type="SMR" id="D8MIA1"/>
<dbReference type="MEROPS" id="S01.509"/>
<dbReference type="GO" id="GO:0005576">
    <property type="term" value="C:extracellular region"/>
    <property type="evidence" value="ECO:0007669"/>
    <property type="project" value="UniProtKB-SubCell"/>
</dbReference>
<dbReference type="GO" id="GO:0030141">
    <property type="term" value="C:secretory granule"/>
    <property type="evidence" value="ECO:0007669"/>
    <property type="project" value="TreeGrafter"/>
</dbReference>
<dbReference type="GO" id="GO:0004252">
    <property type="term" value="F:serine-type endopeptidase activity"/>
    <property type="evidence" value="ECO:0007669"/>
    <property type="project" value="InterPro"/>
</dbReference>
<dbReference type="GO" id="GO:0090729">
    <property type="term" value="F:toxin activity"/>
    <property type="evidence" value="ECO:0007669"/>
    <property type="project" value="UniProtKB-KW"/>
</dbReference>
<dbReference type="GO" id="GO:0006508">
    <property type="term" value="P:proteolysis"/>
    <property type="evidence" value="ECO:0007669"/>
    <property type="project" value="InterPro"/>
</dbReference>
<dbReference type="CDD" id="cd00190">
    <property type="entry name" value="Tryp_SPc"/>
    <property type="match status" value="1"/>
</dbReference>
<dbReference type="FunFam" id="2.40.10.10:FF:000158">
    <property type="entry name" value="Thrombin-like enzyme saxthrombin"/>
    <property type="match status" value="1"/>
</dbReference>
<dbReference type="Gene3D" id="2.40.10.10">
    <property type="entry name" value="Trypsin-like serine proteases"/>
    <property type="match status" value="2"/>
</dbReference>
<dbReference type="InterPro" id="IPR009003">
    <property type="entry name" value="Peptidase_S1_PA"/>
</dbReference>
<dbReference type="InterPro" id="IPR043504">
    <property type="entry name" value="Peptidase_S1_PA_chymotrypsin"/>
</dbReference>
<dbReference type="InterPro" id="IPR001314">
    <property type="entry name" value="Peptidase_S1A"/>
</dbReference>
<dbReference type="InterPro" id="IPR001254">
    <property type="entry name" value="Trypsin_dom"/>
</dbReference>
<dbReference type="PANTHER" id="PTHR24271:SF47">
    <property type="entry name" value="KALLIKREIN-1"/>
    <property type="match status" value="1"/>
</dbReference>
<dbReference type="PANTHER" id="PTHR24271">
    <property type="entry name" value="KALLIKREIN-RELATED"/>
    <property type="match status" value="1"/>
</dbReference>
<dbReference type="Pfam" id="PF00089">
    <property type="entry name" value="Trypsin"/>
    <property type="match status" value="1"/>
</dbReference>
<dbReference type="PRINTS" id="PR00722">
    <property type="entry name" value="CHYMOTRYPSIN"/>
</dbReference>
<dbReference type="SMART" id="SM00020">
    <property type="entry name" value="Tryp_SPc"/>
    <property type="match status" value="1"/>
</dbReference>
<dbReference type="SUPFAM" id="SSF50494">
    <property type="entry name" value="Trypsin-like serine proteases"/>
    <property type="match status" value="1"/>
</dbReference>
<dbReference type="PROSITE" id="PS50240">
    <property type="entry name" value="TRYPSIN_DOM"/>
    <property type="match status" value="1"/>
</dbReference>
<accession>D8MIA1</accession>
<feature type="signal peptide" evidence="2">
    <location>
        <begin position="1" status="less than"/>
        <end position="17"/>
    </location>
</feature>
<feature type="propeptide" id="PRO_0000455649" evidence="7">
    <location>
        <begin position="18"/>
        <end position="23"/>
    </location>
</feature>
<feature type="chain" id="PRO_5003117881" description="Snake venom serine protease homolog rhinocerase 3" evidence="1">
    <location>
        <begin position="24"/>
        <end position="259"/>
    </location>
</feature>
<feature type="domain" description="Peptidase S1" evidence="3">
    <location>
        <begin position="24"/>
        <end position="250"/>
    </location>
</feature>
<feature type="glycosylation site" description="N-linked (GlcNAc...) asparagine" evidence="2">
    <location>
        <position position="80"/>
    </location>
</feature>
<feature type="glycosylation site" description="N-linked (GlcNAc...) asparagine" evidence="2">
    <location>
        <position position="252"/>
    </location>
</feature>
<feature type="disulfide bond" evidence="3">
    <location>
        <begin position="30"/>
        <end position="164"/>
    </location>
</feature>
<feature type="disulfide bond" evidence="3">
    <location>
        <begin position="51"/>
        <end position="67"/>
    </location>
</feature>
<feature type="disulfide bond" evidence="3">
    <location>
        <begin position="99"/>
        <end position="257"/>
    </location>
</feature>
<feature type="disulfide bond" evidence="3">
    <location>
        <begin position="143"/>
        <end position="211"/>
    </location>
</feature>
<feature type="disulfide bond" evidence="3">
    <location>
        <begin position="175"/>
        <end position="190"/>
    </location>
</feature>
<feature type="disulfide bond" evidence="3">
    <location>
        <begin position="201"/>
        <end position="226"/>
    </location>
</feature>
<feature type="non-terminal residue" evidence="8">
    <location>
        <position position="1"/>
    </location>
</feature>
<name>VSPH3_BITRH</name>
<keyword id="KW-0903">Direct protein sequencing</keyword>
<keyword id="KW-1015">Disulfide bond</keyword>
<keyword id="KW-0325">Glycoprotein</keyword>
<keyword id="KW-1199">Hemostasis impairing toxin</keyword>
<keyword id="KW-0964">Secreted</keyword>
<keyword id="KW-0721">Serine protease homolog</keyword>
<keyword id="KW-0732">Signal</keyword>
<keyword id="KW-0800">Toxin</keyword>
<reference key="1">
    <citation type="journal article" date="2011" name="PLoS ONE">
        <title>Evolutionary analysis of novel serine proteases in the venom gland transcriptome of Bitis gabonica rhinoceros.</title>
        <authorList>
            <person name="Vaiyapuri S."/>
            <person name="Wagstaff S.C."/>
            <person name="Harrison R.A."/>
            <person name="Gibbins J.M."/>
            <person name="Hutchinson E.G."/>
        </authorList>
    </citation>
    <scope>NUCLEOTIDE SEQUENCE [GENOMIC DNA]</scope>
    <scope>ISOLATION</scope>
    <source>
        <tissue>Venom</tissue>
        <tissue>Venom gland</tissue>
    </source>
</reference>
<reference key="2">
    <citation type="journal article" date="2007" name="J. Proteome Res.">
        <title>Snake venomics of Bitis species reveals large intragenus venom toxin composition variation: application to taxonomy of congeneric taxa.</title>
        <authorList>
            <person name="Calvete J.J."/>
            <person name="Escolano J."/>
            <person name="Sanz L."/>
        </authorList>
    </citation>
    <scope>PROTEIN SEQUENCE OF 24-38</scope>
    <scope>SUBCELLULAR LOCATION</scope>
    <source>
        <tissue>Venom</tissue>
    </source>
</reference>